<evidence type="ECO:0000255" key="1">
    <source>
        <dbReference type="HAMAP-Rule" id="MF_00262"/>
    </source>
</evidence>
<gene>
    <name evidence="1" type="primary">minE</name>
    <name type="ordered locus">Pro_0362</name>
</gene>
<protein>
    <recommendedName>
        <fullName evidence="1">Cell division topological specificity factor</fullName>
    </recommendedName>
</protein>
<sequence length="106" mass="11780">MTLRDILNKLMGRQPASAAKARERLQLVLAHDRTDLSPDLLEQMREEILSVVAKYVEIDFEEGAVSLETEDRMTALVANLPIKRTLSGEIKIKEQSSADNSAKAVS</sequence>
<feature type="chain" id="PRO_0000298147" description="Cell division topological specificity factor">
    <location>
        <begin position="1"/>
        <end position="106"/>
    </location>
</feature>
<reference key="1">
    <citation type="journal article" date="2003" name="Proc. Natl. Acad. Sci. U.S.A.">
        <title>Genome sequence of the cyanobacterium Prochlorococcus marinus SS120, a nearly minimal oxyphototrophic genome.</title>
        <authorList>
            <person name="Dufresne A."/>
            <person name="Salanoubat M."/>
            <person name="Partensky F."/>
            <person name="Artiguenave F."/>
            <person name="Axmann I.M."/>
            <person name="Barbe V."/>
            <person name="Duprat S."/>
            <person name="Galperin M.Y."/>
            <person name="Koonin E.V."/>
            <person name="Le Gall F."/>
            <person name="Makarova K.S."/>
            <person name="Ostrowski M."/>
            <person name="Oztas S."/>
            <person name="Robert C."/>
            <person name="Rogozin I.B."/>
            <person name="Scanlan D.J."/>
            <person name="Tandeau de Marsac N."/>
            <person name="Weissenbach J."/>
            <person name="Wincker P."/>
            <person name="Wolf Y.I."/>
            <person name="Hess W.R."/>
        </authorList>
    </citation>
    <scope>NUCLEOTIDE SEQUENCE [LARGE SCALE GENOMIC DNA]</scope>
    <source>
        <strain>SARG / CCMP1375 / SS120</strain>
    </source>
</reference>
<organism>
    <name type="scientific">Prochlorococcus marinus (strain SARG / CCMP1375 / SS120)</name>
    <dbReference type="NCBI Taxonomy" id="167539"/>
    <lineage>
        <taxon>Bacteria</taxon>
        <taxon>Bacillati</taxon>
        <taxon>Cyanobacteriota</taxon>
        <taxon>Cyanophyceae</taxon>
        <taxon>Synechococcales</taxon>
        <taxon>Prochlorococcaceae</taxon>
        <taxon>Prochlorococcus</taxon>
    </lineage>
</organism>
<keyword id="KW-0131">Cell cycle</keyword>
<keyword id="KW-0132">Cell division</keyword>
<keyword id="KW-1185">Reference proteome</keyword>
<name>MINE_PROMA</name>
<dbReference type="EMBL" id="AE017126">
    <property type="protein sequence ID" value="AAP99408.1"/>
    <property type="molecule type" value="Genomic_DNA"/>
</dbReference>
<dbReference type="RefSeq" id="NP_874756.1">
    <property type="nucleotide sequence ID" value="NC_005042.1"/>
</dbReference>
<dbReference type="RefSeq" id="WP_011124517.1">
    <property type="nucleotide sequence ID" value="NC_005042.1"/>
</dbReference>
<dbReference type="SMR" id="Q7VDL4"/>
<dbReference type="STRING" id="167539.Pro_0362"/>
<dbReference type="EnsemblBacteria" id="AAP99408">
    <property type="protein sequence ID" value="AAP99408"/>
    <property type="gene ID" value="Pro_0362"/>
</dbReference>
<dbReference type="KEGG" id="pma:Pro_0362"/>
<dbReference type="PATRIC" id="fig|167539.5.peg.370"/>
<dbReference type="eggNOG" id="COG0851">
    <property type="taxonomic scope" value="Bacteria"/>
</dbReference>
<dbReference type="HOGENOM" id="CLU_137929_1_1_3"/>
<dbReference type="OrthoDB" id="9796578at2"/>
<dbReference type="Proteomes" id="UP000001420">
    <property type="component" value="Chromosome"/>
</dbReference>
<dbReference type="GO" id="GO:0051301">
    <property type="term" value="P:cell division"/>
    <property type="evidence" value="ECO:0007669"/>
    <property type="project" value="UniProtKB-KW"/>
</dbReference>
<dbReference type="GO" id="GO:0032955">
    <property type="term" value="P:regulation of division septum assembly"/>
    <property type="evidence" value="ECO:0007669"/>
    <property type="project" value="InterPro"/>
</dbReference>
<dbReference type="Gene3D" id="3.30.1070.10">
    <property type="entry name" value="Cell division topological specificity factor MinE"/>
    <property type="match status" value="1"/>
</dbReference>
<dbReference type="HAMAP" id="MF_00262">
    <property type="entry name" value="MinE"/>
    <property type="match status" value="1"/>
</dbReference>
<dbReference type="InterPro" id="IPR005527">
    <property type="entry name" value="MinE"/>
</dbReference>
<dbReference type="InterPro" id="IPR036707">
    <property type="entry name" value="MinE_sf"/>
</dbReference>
<dbReference type="NCBIfam" id="TIGR01215">
    <property type="entry name" value="minE"/>
    <property type="match status" value="1"/>
</dbReference>
<dbReference type="NCBIfam" id="NF001422">
    <property type="entry name" value="PRK00296.1"/>
    <property type="match status" value="1"/>
</dbReference>
<dbReference type="Pfam" id="PF03776">
    <property type="entry name" value="MinE"/>
    <property type="match status" value="1"/>
</dbReference>
<dbReference type="SUPFAM" id="SSF55229">
    <property type="entry name" value="Cell division protein MinE topological specificity domain"/>
    <property type="match status" value="1"/>
</dbReference>
<accession>Q7VDL4</accession>
<comment type="function">
    <text evidence="1">Prevents the cell division inhibition by proteins MinC and MinD at internal division sites while permitting inhibition at polar sites. This ensures cell division at the proper site by restricting the formation of a division septum at the midpoint of the long axis of the cell.</text>
</comment>
<comment type="similarity">
    <text evidence="1">Belongs to the MinE family.</text>
</comment>
<proteinExistence type="inferred from homology"/>